<evidence type="ECO:0000255" key="1">
    <source>
        <dbReference type="HAMAP-Rule" id="MF_00281"/>
    </source>
</evidence>
<reference key="1">
    <citation type="submission" date="2008-03" db="EMBL/GenBank/DDBJ databases">
        <title>Complete sequence of Leptothrix cholodnii SP-6.</title>
        <authorList>
            <consortium name="US DOE Joint Genome Institute"/>
            <person name="Copeland A."/>
            <person name="Lucas S."/>
            <person name="Lapidus A."/>
            <person name="Glavina del Rio T."/>
            <person name="Dalin E."/>
            <person name="Tice H."/>
            <person name="Bruce D."/>
            <person name="Goodwin L."/>
            <person name="Pitluck S."/>
            <person name="Chertkov O."/>
            <person name="Brettin T."/>
            <person name="Detter J.C."/>
            <person name="Han C."/>
            <person name="Kuske C.R."/>
            <person name="Schmutz J."/>
            <person name="Larimer F."/>
            <person name="Land M."/>
            <person name="Hauser L."/>
            <person name="Kyrpides N."/>
            <person name="Lykidis A."/>
            <person name="Emerson D."/>
            <person name="Richardson P."/>
        </authorList>
    </citation>
    <scope>NUCLEOTIDE SEQUENCE [LARGE SCALE GENOMIC DNA]</scope>
    <source>
        <strain>ATCC 51168 / LMG 8142 / SP-6</strain>
    </source>
</reference>
<gene>
    <name evidence="1" type="primary">pheS</name>
    <name type="ordered locus">Lcho_1749</name>
</gene>
<feature type="chain" id="PRO_1000114888" description="Phenylalanine--tRNA ligase alpha subunit">
    <location>
        <begin position="1"/>
        <end position="347"/>
    </location>
</feature>
<feature type="binding site" evidence="1">
    <location>
        <position position="268"/>
    </location>
    <ligand>
        <name>Mg(2+)</name>
        <dbReference type="ChEBI" id="CHEBI:18420"/>
        <note>shared with beta subunit</note>
    </ligand>
</feature>
<comment type="catalytic activity">
    <reaction evidence="1">
        <text>tRNA(Phe) + L-phenylalanine + ATP = L-phenylalanyl-tRNA(Phe) + AMP + diphosphate + H(+)</text>
        <dbReference type="Rhea" id="RHEA:19413"/>
        <dbReference type="Rhea" id="RHEA-COMP:9668"/>
        <dbReference type="Rhea" id="RHEA-COMP:9699"/>
        <dbReference type="ChEBI" id="CHEBI:15378"/>
        <dbReference type="ChEBI" id="CHEBI:30616"/>
        <dbReference type="ChEBI" id="CHEBI:33019"/>
        <dbReference type="ChEBI" id="CHEBI:58095"/>
        <dbReference type="ChEBI" id="CHEBI:78442"/>
        <dbReference type="ChEBI" id="CHEBI:78531"/>
        <dbReference type="ChEBI" id="CHEBI:456215"/>
        <dbReference type="EC" id="6.1.1.20"/>
    </reaction>
</comment>
<comment type="cofactor">
    <cofactor evidence="1">
        <name>Mg(2+)</name>
        <dbReference type="ChEBI" id="CHEBI:18420"/>
    </cofactor>
    <text evidence="1">Binds 2 magnesium ions per tetramer.</text>
</comment>
<comment type="subunit">
    <text evidence="1">Tetramer of two alpha and two beta subunits.</text>
</comment>
<comment type="subcellular location">
    <subcellularLocation>
        <location evidence="1">Cytoplasm</location>
    </subcellularLocation>
</comment>
<comment type="similarity">
    <text evidence="1">Belongs to the class-II aminoacyl-tRNA synthetase family. Phe-tRNA synthetase alpha subunit type 1 subfamily.</text>
</comment>
<proteinExistence type="inferred from homology"/>
<protein>
    <recommendedName>
        <fullName evidence="1">Phenylalanine--tRNA ligase alpha subunit</fullName>
        <ecNumber evidence="1">6.1.1.20</ecNumber>
    </recommendedName>
    <alternativeName>
        <fullName evidence="1">Phenylalanyl-tRNA synthetase alpha subunit</fullName>
        <shortName evidence="1">PheRS</shortName>
    </alternativeName>
</protein>
<name>SYFA_LEPCP</name>
<accession>B1XYZ7</accession>
<dbReference type="EC" id="6.1.1.20" evidence="1"/>
<dbReference type="EMBL" id="CP001013">
    <property type="protein sequence ID" value="ACB34016.1"/>
    <property type="molecule type" value="Genomic_DNA"/>
</dbReference>
<dbReference type="RefSeq" id="WP_012346777.1">
    <property type="nucleotide sequence ID" value="NC_010524.1"/>
</dbReference>
<dbReference type="SMR" id="B1XYZ7"/>
<dbReference type="STRING" id="395495.Lcho_1749"/>
<dbReference type="KEGG" id="lch:Lcho_1749"/>
<dbReference type="eggNOG" id="COG0016">
    <property type="taxonomic scope" value="Bacteria"/>
</dbReference>
<dbReference type="HOGENOM" id="CLU_025086_0_1_4"/>
<dbReference type="OrthoDB" id="9800719at2"/>
<dbReference type="Proteomes" id="UP000001693">
    <property type="component" value="Chromosome"/>
</dbReference>
<dbReference type="GO" id="GO:0005737">
    <property type="term" value="C:cytoplasm"/>
    <property type="evidence" value="ECO:0007669"/>
    <property type="project" value="UniProtKB-SubCell"/>
</dbReference>
<dbReference type="GO" id="GO:0005524">
    <property type="term" value="F:ATP binding"/>
    <property type="evidence" value="ECO:0007669"/>
    <property type="project" value="UniProtKB-UniRule"/>
</dbReference>
<dbReference type="GO" id="GO:0000287">
    <property type="term" value="F:magnesium ion binding"/>
    <property type="evidence" value="ECO:0007669"/>
    <property type="project" value="UniProtKB-UniRule"/>
</dbReference>
<dbReference type="GO" id="GO:0004826">
    <property type="term" value="F:phenylalanine-tRNA ligase activity"/>
    <property type="evidence" value="ECO:0007669"/>
    <property type="project" value="UniProtKB-UniRule"/>
</dbReference>
<dbReference type="GO" id="GO:0000049">
    <property type="term" value="F:tRNA binding"/>
    <property type="evidence" value="ECO:0007669"/>
    <property type="project" value="InterPro"/>
</dbReference>
<dbReference type="GO" id="GO:0006432">
    <property type="term" value="P:phenylalanyl-tRNA aminoacylation"/>
    <property type="evidence" value="ECO:0007669"/>
    <property type="project" value="UniProtKB-UniRule"/>
</dbReference>
<dbReference type="CDD" id="cd00496">
    <property type="entry name" value="PheRS_alpha_core"/>
    <property type="match status" value="1"/>
</dbReference>
<dbReference type="Gene3D" id="3.30.930.10">
    <property type="entry name" value="Bira Bifunctional Protein, Domain 2"/>
    <property type="match status" value="1"/>
</dbReference>
<dbReference type="HAMAP" id="MF_00281">
    <property type="entry name" value="Phe_tRNA_synth_alpha1"/>
    <property type="match status" value="1"/>
</dbReference>
<dbReference type="InterPro" id="IPR006195">
    <property type="entry name" value="aa-tRNA-synth_II"/>
</dbReference>
<dbReference type="InterPro" id="IPR045864">
    <property type="entry name" value="aa-tRNA-synth_II/BPL/LPL"/>
</dbReference>
<dbReference type="InterPro" id="IPR004529">
    <property type="entry name" value="Phe-tRNA-synth_IIc_asu"/>
</dbReference>
<dbReference type="InterPro" id="IPR004188">
    <property type="entry name" value="Phe-tRNA_ligase_II_N"/>
</dbReference>
<dbReference type="InterPro" id="IPR022911">
    <property type="entry name" value="Phe_tRNA_ligase_alpha1_bac"/>
</dbReference>
<dbReference type="InterPro" id="IPR002319">
    <property type="entry name" value="Phenylalanyl-tRNA_Synthase"/>
</dbReference>
<dbReference type="InterPro" id="IPR010978">
    <property type="entry name" value="tRNA-bd_arm"/>
</dbReference>
<dbReference type="NCBIfam" id="TIGR00468">
    <property type="entry name" value="pheS"/>
    <property type="match status" value="1"/>
</dbReference>
<dbReference type="PANTHER" id="PTHR11538:SF41">
    <property type="entry name" value="PHENYLALANINE--TRNA LIGASE, MITOCHONDRIAL"/>
    <property type="match status" value="1"/>
</dbReference>
<dbReference type="PANTHER" id="PTHR11538">
    <property type="entry name" value="PHENYLALANYL-TRNA SYNTHETASE"/>
    <property type="match status" value="1"/>
</dbReference>
<dbReference type="Pfam" id="PF02912">
    <property type="entry name" value="Phe_tRNA-synt_N"/>
    <property type="match status" value="1"/>
</dbReference>
<dbReference type="Pfam" id="PF01409">
    <property type="entry name" value="tRNA-synt_2d"/>
    <property type="match status" value="1"/>
</dbReference>
<dbReference type="SUPFAM" id="SSF55681">
    <property type="entry name" value="Class II aaRS and biotin synthetases"/>
    <property type="match status" value="1"/>
</dbReference>
<dbReference type="SUPFAM" id="SSF46589">
    <property type="entry name" value="tRNA-binding arm"/>
    <property type="match status" value="1"/>
</dbReference>
<dbReference type="PROSITE" id="PS50862">
    <property type="entry name" value="AA_TRNA_LIGASE_II"/>
    <property type="match status" value="1"/>
</dbReference>
<keyword id="KW-0030">Aminoacyl-tRNA synthetase</keyword>
<keyword id="KW-0067">ATP-binding</keyword>
<keyword id="KW-0963">Cytoplasm</keyword>
<keyword id="KW-0436">Ligase</keyword>
<keyword id="KW-0460">Magnesium</keyword>
<keyword id="KW-0479">Metal-binding</keyword>
<keyword id="KW-0547">Nucleotide-binding</keyword>
<keyword id="KW-0648">Protein biosynthesis</keyword>
<keyword id="KW-1185">Reference proteome</keyword>
<organism>
    <name type="scientific">Leptothrix cholodnii (strain ATCC 51168 / LMG 8142 / SP-6)</name>
    <name type="common">Leptothrix discophora (strain SP-6)</name>
    <dbReference type="NCBI Taxonomy" id="395495"/>
    <lineage>
        <taxon>Bacteria</taxon>
        <taxon>Pseudomonadati</taxon>
        <taxon>Pseudomonadota</taxon>
        <taxon>Betaproteobacteria</taxon>
        <taxon>Burkholderiales</taxon>
        <taxon>Sphaerotilaceae</taxon>
        <taxon>Leptothrix</taxon>
    </lineage>
</organism>
<sequence>MNDLDTLVSAAQADFAAATTPAQLEDAKARFLGKTGRVTELLKGMAALTPDEKKTRGASINETKQRIEAALTARRQALAEAELQAQLKAEALDVTLPGRQRGVGGLHPVSRTLERIEQIFGSMGFDVADGPEIETDWYSFTALNNPENHPARSMQDTFYVDMNDEAGRPLCLRPHTSPMQVRYARQHAALHAGKDTLPEIRVIAPGRTYRVDSDATHSPMFHQCEGLWIGENVSFKDLKSVFTDFFRTFFETDDLELRFRPSFFPFTEPSAEVDIAFASGPLKGRWLEVAGSGQVHPNVVRNFGLDPERYIGFAFGMGPDRLTMLRYGVNDLRLFFEGDLRFLSQFK</sequence>